<organism>
    <name type="scientific">Lactobacillus delbrueckii subsp. bulgaricus (strain ATCC 11842 / DSM 20081 / BCRC 10696 / JCM 1002 / NBRC 13953 / NCIMB 11778 / NCTC 12712 / WDCM 00102 / Lb 14)</name>
    <dbReference type="NCBI Taxonomy" id="390333"/>
    <lineage>
        <taxon>Bacteria</taxon>
        <taxon>Bacillati</taxon>
        <taxon>Bacillota</taxon>
        <taxon>Bacilli</taxon>
        <taxon>Lactobacillales</taxon>
        <taxon>Lactobacillaceae</taxon>
        <taxon>Lactobacillus</taxon>
    </lineage>
</organism>
<name>RL18_LACDA</name>
<feature type="chain" id="PRO_0000251321" description="Large ribosomal subunit protein uL18">
    <location>
        <begin position="1"/>
        <end position="119"/>
    </location>
</feature>
<reference key="1">
    <citation type="journal article" date="2006" name="Proc. Natl. Acad. Sci. U.S.A.">
        <title>The complete genome sequence of Lactobacillus bulgaricus reveals extensive and ongoing reductive evolution.</title>
        <authorList>
            <person name="van de Guchte M."/>
            <person name="Penaud S."/>
            <person name="Grimaldi C."/>
            <person name="Barbe V."/>
            <person name="Bryson K."/>
            <person name="Nicolas P."/>
            <person name="Robert C."/>
            <person name="Oztas S."/>
            <person name="Mangenot S."/>
            <person name="Couloux A."/>
            <person name="Loux V."/>
            <person name="Dervyn R."/>
            <person name="Bossy R."/>
            <person name="Bolotin A."/>
            <person name="Batto J.-M."/>
            <person name="Walunas T."/>
            <person name="Gibrat J.-F."/>
            <person name="Bessieres P."/>
            <person name="Weissenbach J."/>
            <person name="Ehrlich S.D."/>
            <person name="Maguin E."/>
        </authorList>
    </citation>
    <scope>NUCLEOTIDE SEQUENCE [LARGE SCALE GENOMIC DNA]</scope>
    <source>
        <strain>ATCC 11842 / DSM 20081 / BCRC 10696 / JCM 1002 / NBRC 13953 / NCIMB 11778 / NCTC 12712 / WDCM 00102 / Lb 14</strain>
    </source>
</reference>
<protein>
    <recommendedName>
        <fullName evidence="1">Large ribosomal subunit protein uL18</fullName>
    </recommendedName>
    <alternativeName>
        <fullName evidence="2">50S ribosomal protein L18</fullName>
    </alternativeName>
</protein>
<keyword id="KW-1185">Reference proteome</keyword>
<keyword id="KW-0687">Ribonucleoprotein</keyword>
<keyword id="KW-0689">Ribosomal protein</keyword>
<keyword id="KW-0694">RNA-binding</keyword>
<keyword id="KW-0699">rRNA-binding</keyword>
<gene>
    <name evidence="1" type="primary">rplR</name>
    <name type="ordered locus">Ldb0412</name>
</gene>
<accession>Q1GBK2</accession>
<proteinExistence type="inferred from homology"/>
<comment type="function">
    <text evidence="1">This is one of the proteins that bind and probably mediate the attachment of the 5S RNA into the large ribosomal subunit, where it forms part of the central protuberance.</text>
</comment>
<comment type="subunit">
    <text evidence="1">Part of the 50S ribosomal subunit; part of the 5S rRNA/L5/L18/L25 subcomplex. Contacts the 5S and 23S rRNAs.</text>
</comment>
<comment type="similarity">
    <text evidence="1">Belongs to the universal ribosomal protein uL18 family.</text>
</comment>
<evidence type="ECO:0000255" key="1">
    <source>
        <dbReference type="HAMAP-Rule" id="MF_01337"/>
    </source>
</evidence>
<evidence type="ECO:0000305" key="2"/>
<dbReference type="EMBL" id="CR954253">
    <property type="protein sequence ID" value="CAI97247.1"/>
    <property type="molecule type" value="Genomic_DNA"/>
</dbReference>
<dbReference type="RefSeq" id="WP_002878185.1">
    <property type="nucleotide sequence ID" value="NZ_JQAV01000001.1"/>
</dbReference>
<dbReference type="SMR" id="Q1GBK2"/>
<dbReference type="STRING" id="390333.Ldb0412"/>
<dbReference type="GeneID" id="69668442"/>
<dbReference type="KEGG" id="ldb:Ldb0412"/>
<dbReference type="eggNOG" id="COG0256">
    <property type="taxonomic scope" value="Bacteria"/>
</dbReference>
<dbReference type="HOGENOM" id="CLU_098841_0_1_9"/>
<dbReference type="BioCyc" id="LDEL390333:LDB_RS01750-MONOMER"/>
<dbReference type="Proteomes" id="UP000001259">
    <property type="component" value="Chromosome"/>
</dbReference>
<dbReference type="GO" id="GO:0022625">
    <property type="term" value="C:cytosolic large ribosomal subunit"/>
    <property type="evidence" value="ECO:0007669"/>
    <property type="project" value="TreeGrafter"/>
</dbReference>
<dbReference type="GO" id="GO:0008097">
    <property type="term" value="F:5S rRNA binding"/>
    <property type="evidence" value="ECO:0007669"/>
    <property type="project" value="TreeGrafter"/>
</dbReference>
<dbReference type="GO" id="GO:0003735">
    <property type="term" value="F:structural constituent of ribosome"/>
    <property type="evidence" value="ECO:0007669"/>
    <property type="project" value="InterPro"/>
</dbReference>
<dbReference type="GO" id="GO:0006412">
    <property type="term" value="P:translation"/>
    <property type="evidence" value="ECO:0007669"/>
    <property type="project" value="UniProtKB-UniRule"/>
</dbReference>
<dbReference type="CDD" id="cd00432">
    <property type="entry name" value="Ribosomal_L18_L5e"/>
    <property type="match status" value="1"/>
</dbReference>
<dbReference type="FunFam" id="3.30.420.100:FF:000001">
    <property type="entry name" value="50S ribosomal protein L18"/>
    <property type="match status" value="1"/>
</dbReference>
<dbReference type="Gene3D" id="3.30.420.100">
    <property type="match status" value="1"/>
</dbReference>
<dbReference type="HAMAP" id="MF_01337_B">
    <property type="entry name" value="Ribosomal_uL18_B"/>
    <property type="match status" value="1"/>
</dbReference>
<dbReference type="InterPro" id="IPR004389">
    <property type="entry name" value="Ribosomal_uL18_bac-type"/>
</dbReference>
<dbReference type="InterPro" id="IPR005484">
    <property type="entry name" value="Ribosomal_uL18_bac/euk"/>
</dbReference>
<dbReference type="NCBIfam" id="TIGR00060">
    <property type="entry name" value="L18_bact"/>
    <property type="match status" value="1"/>
</dbReference>
<dbReference type="PANTHER" id="PTHR12899">
    <property type="entry name" value="39S RIBOSOMAL PROTEIN L18, MITOCHONDRIAL"/>
    <property type="match status" value="1"/>
</dbReference>
<dbReference type="PANTHER" id="PTHR12899:SF3">
    <property type="entry name" value="LARGE RIBOSOMAL SUBUNIT PROTEIN UL18M"/>
    <property type="match status" value="1"/>
</dbReference>
<dbReference type="Pfam" id="PF00861">
    <property type="entry name" value="Ribosomal_L18p"/>
    <property type="match status" value="1"/>
</dbReference>
<dbReference type="SUPFAM" id="SSF53137">
    <property type="entry name" value="Translational machinery components"/>
    <property type="match status" value="1"/>
</dbReference>
<sequence length="119" mass="12926">MISKPDKNKLRLKRHRRVRGKISGTAERPRLSVFRSNTNIYAQLIDDVAGVTLASASTLDKSVSKDATKVEQAQAVGKAIAEAGKAKGITEVVFDRGGYIYHGRVKALADAARENGLEF</sequence>